<proteinExistence type="inferred from homology"/>
<comment type="function">
    <text evidence="1">Produces ATP from ADP in the presence of a proton gradient across the membrane. The alpha chain is a regulatory subunit.</text>
</comment>
<comment type="catalytic activity">
    <reaction evidence="1">
        <text>ATP + H2O + 4 H(+)(in) = ADP + phosphate + 5 H(+)(out)</text>
        <dbReference type="Rhea" id="RHEA:57720"/>
        <dbReference type="ChEBI" id="CHEBI:15377"/>
        <dbReference type="ChEBI" id="CHEBI:15378"/>
        <dbReference type="ChEBI" id="CHEBI:30616"/>
        <dbReference type="ChEBI" id="CHEBI:43474"/>
        <dbReference type="ChEBI" id="CHEBI:456216"/>
        <dbReference type="EC" id="7.1.2.2"/>
    </reaction>
</comment>
<comment type="subunit">
    <text evidence="1">F-type ATPases have 2 components, CF(1) - the catalytic core - and CF(0) - the membrane proton channel. CF(1) has five subunits: alpha(3), beta(3), gamma(1), delta(1), epsilon(1). CF(0) has three main subunits: a(1), b(2) and c(9-12). The alpha and beta chains form an alternating ring which encloses part of the gamma chain. CF(1) is attached to CF(0) by a central stalk formed by the gamma and epsilon chains, while a peripheral stalk is formed by the delta and b chains.</text>
</comment>
<comment type="subcellular location">
    <subcellularLocation>
        <location evidence="1">Cell inner membrane</location>
        <topology evidence="1">Peripheral membrane protein</topology>
    </subcellularLocation>
</comment>
<comment type="similarity">
    <text evidence="1">Belongs to the ATPase alpha/beta chains family.</text>
</comment>
<accession>Q1Q897</accession>
<feature type="chain" id="PRO_0000256100" description="ATP synthase subunit alpha">
    <location>
        <begin position="1"/>
        <end position="514"/>
    </location>
</feature>
<feature type="binding site" evidence="1">
    <location>
        <begin position="170"/>
        <end position="177"/>
    </location>
    <ligand>
        <name>ATP</name>
        <dbReference type="ChEBI" id="CHEBI:30616"/>
    </ligand>
</feature>
<feature type="site" description="Required for activity" evidence="1">
    <location>
        <position position="374"/>
    </location>
</feature>
<protein>
    <recommendedName>
        <fullName evidence="1">ATP synthase subunit alpha</fullName>
        <ecNumber evidence="1">7.1.2.2</ecNumber>
    </recommendedName>
    <alternativeName>
        <fullName evidence="1">ATP synthase F1 sector subunit alpha</fullName>
    </alternativeName>
    <alternativeName>
        <fullName evidence="1">F-ATPase subunit alpha</fullName>
    </alternativeName>
</protein>
<reference key="1">
    <citation type="submission" date="2006-03" db="EMBL/GenBank/DDBJ databases">
        <title>Complete sequence of chromosome of Psychrobacter cryohalolentis K5.</title>
        <authorList>
            <consortium name="US DOE Joint Genome Institute"/>
            <person name="Copeland A."/>
            <person name="Lucas S."/>
            <person name="Lapidus A."/>
            <person name="Barry K."/>
            <person name="Detter J.C."/>
            <person name="Glavina T."/>
            <person name="Hammon N."/>
            <person name="Israni S."/>
            <person name="Dalin E."/>
            <person name="Tice H."/>
            <person name="Pitluck S."/>
            <person name="Brettin T."/>
            <person name="Bruce D."/>
            <person name="Han C."/>
            <person name="Tapia R."/>
            <person name="Sims D.R."/>
            <person name="Gilna P."/>
            <person name="Schmutz J."/>
            <person name="Larimer F."/>
            <person name="Land M."/>
            <person name="Hauser L."/>
            <person name="Kyrpides N."/>
            <person name="Kim E."/>
            <person name="Richardson P."/>
        </authorList>
    </citation>
    <scope>NUCLEOTIDE SEQUENCE [LARGE SCALE GENOMIC DNA]</scope>
    <source>
        <strain>ATCC BAA-1226 / DSM 17306 / VKM B-2378 / K5</strain>
    </source>
</reference>
<evidence type="ECO:0000255" key="1">
    <source>
        <dbReference type="HAMAP-Rule" id="MF_01346"/>
    </source>
</evidence>
<sequence>MQQLNPAEISNLIKQRIQDLDAGATAKNEGTIVKVSDGIVQIHGLEDAMYGEMIEFEGEVYGMALNLERDSVGAVVLGDFLKLQEGQKAYCTGRILEVPVGPELLGRVVDALGNPIDGKGPINAKMTDKVEKIAPGVIDRQSVDQPVMTGYKSVDTMIPIGRGQRELIIGDRQTGKTAMAIDAIIAQKSSGIKCVYVAIGQKRSTIANVVRKLEQTGALEYTTVVVASASEPAALQYIAPYSGCTMGEYFRDRGEDALIVFDDLSKQAVAYRQISLLLRRPPGREAYPGDVFYLHSRLLERASRVNAAYVEKFTNGEVVGKTGSLTALPIIETQAGDVSAFVPTNVISITDGQIFLESSLFNSGIRPAVNAGISVSRVGGAAQTKIIKKLSGGIRTALAQYRELAAFAQFASDLDDVTREQLDHGERVTELMKQKQYQPMSISEQAAVIYASNEGFLADVPVEKIGSFEEAYLRYMHDEQADLMKEIDDTANYNDDIAGRLKSSLETFKQNHSY</sequence>
<organism>
    <name type="scientific">Psychrobacter cryohalolentis (strain ATCC BAA-1226 / DSM 17306 / VKM B-2378 / K5)</name>
    <dbReference type="NCBI Taxonomy" id="335284"/>
    <lineage>
        <taxon>Bacteria</taxon>
        <taxon>Pseudomonadati</taxon>
        <taxon>Pseudomonadota</taxon>
        <taxon>Gammaproteobacteria</taxon>
        <taxon>Moraxellales</taxon>
        <taxon>Moraxellaceae</taxon>
        <taxon>Psychrobacter</taxon>
    </lineage>
</organism>
<name>ATPA_PSYCK</name>
<gene>
    <name evidence="1" type="primary">atpA</name>
    <name type="ordered locus">Pcryo_2329</name>
</gene>
<dbReference type="EC" id="7.1.2.2" evidence="1"/>
<dbReference type="EMBL" id="CP000323">
    <property type="protein sequence ID" value="ABE76106.1"/>
    <property type="molecule type" value="Genomic_DNA"/>
</dbReference>
<dbReference type="RefSeq" id="WP_011514635.1">
    <property type="nucleotide sequence ID" value="NC_007969.1"/>
</dbReference>
<dbReference type="SMR" id="Q1Q897"/>
<dbReference type="STRING" id="335284.Pcryo_2329"/>
<dbReference type="KEGG" id="pcr:Pcryo_2329"/>
<dbReference type="eggNOG" id="COG0056">
    <property type="taxonomic scope" value="Bacteria"/>
</dbReference>
<dbReference type="HOGENOM" id="CLU_010091_2_1_6"/>
<dbReference type="Proteomes" id="UP000002425">
    <property type="component" value="Chromosome"/>
</dbReference>
<dbReference type="GO" id="GO:0005886">
    <property type="term" value="C:plasma membrane"/>
    <property type="evidence" value="ECO:0007669"/>
    <property type="project" value="UniProtKB-SubCell"/>
</dbReference>
<dbReference type="GO" id="GO:0045259">
    <property type="term" value="C:proton-transporting ATP synthase complex"/>
    <property type="evidence" value="ECO:0007669"/>
    <property type="project" value="UniProtKB-KW"/>
</dbReference>
<dbReference type="GO" id="GO:0043531">
    <property type="term" value="F:ADP binding"/>
    <property type="evidence" value="ECO:0007669"/>
    <property type="project" value="TreeGrafter"/>
</dbReference>
<dbReference type="GO" id="GO:0005524">
    <property type="term" value="F:ATP binding"/>
    <property type="evidence" value="ECO:0007669"/>
    <property type="project" value="UniProtKB-UniRule"/>
</dbReference>
<dbReference type="GO" id="GO:0046933">
    <property type="term" value="F:proton-transporting ATP synthase activity, rotational mechanism"/>
    <property type="evidence" value="ECO:0007669"/>
    <property type="project" value="UniProtKB-UniRule"/>
</dbReference>
<dbReference type="CDD" id="cd18113">
    <property type="entry name" value="ATP-synt_F1_alpha_C"/>
    <property type="match status" value="1"/>
</dbReference>
<dbReference type="CDD" id="cd18116">
    <property type="entry name" value="ATP-synt_F1_alpha_N"/>
    <property type="match status" value="1"/>
</dbReference>
<dbReference type="CDD" id="cd01132">
    <property type="entry name" value="F1-ATPase_alpha_CD"/>
    <property type="match status" value="1"/>
</dbReference>
<dbReference type="FunFam" id="1.20.150.20:FF:000001">
    <property type="entry name" value="ATP synthase subunit alpha"/>
    <property type="match status" value="1"/>
</dbReference>
<dbReference type="FunFam" id="2.40.30.20:FF:000001">
    <property type="entry name" value="ATP synthase subunit alpha"/>
    <property type="match status" value="1"/>
</dbReference>
<dbReference type="FunFam" id="3.40.50.300:FF:000002">
    <property type="entry name" value="ATP synthase subunit alpha"/>
    <property type="match status" value="1"/>
</dbReference>
<dbReference type="Gene3D" id="2.40.30.20">
    <property type="match status" value="1"/>
</dbReference>
<dbReference type="Gene3D" id="1.20.150.20">
    <property type="entry name" value="ATP synthase alpha/beta chain, C-terminal domain"/>
    <property type="match status" value="1"/>
</dbReference>
<dbReference type="Gene3D" id="3.40.50.300">
    <property type="entry name" value="P-loop containing nucleotide triphosphate hydrolases"/>
    <property type="match status" value="1"/>
</dbReference>
<dbReference type="HAMAP" id="MF_01346">
    <property type="entry name" value="ATP_synth_alpha_bact"/>
    <property type="match status" value="1"/>
</dbReference>
<dbReference type="InterPro" id="IPR023366">
    <property type="entry name" value="ATP_synth_asu-like_sf"/>
</dbReference>
<dbReference type="InterPro" id="IPR000793">
    <property type="entry name" value="ATP_synth_asu_C"/>
</dbReference>
<dbReference type="InterPro" id="IPR038376">
    <property type="entry name" value="ATP_synth_asu_C_sf"/>
</dbReference>
<dbReference type="InterPro" id="IPR033732">
    <property type="entry name" value="ATP_synth_F1_a_nt-bd_dom"/>
</dbReference>
<dbReference type="InterPro" id="IPR005294">
    <property type="entry name" value="ATP_synth_F1_asu"/>
</dbReference>
<dbReference type="InterPro" id="IPR020003">
    <property type="entry name" value="ATPase_a/bsu_AS"/>
</dbReference>
<dbReference type="InterPro" id="IPR004100">
    <property type="entry name" value="ATPase_F1/V1/A1_a/bsu_N"/>
</dbReference>
<dbReference type="InterPro" id="IPR036121">
    <property type="entry name" value="ATPase_F1/V1/A1_a/bsu_N_sf"/>
</dbReference>
<dbReference type="InterPro" id="IPR000194">
    <property type="entry name" value="ATPase_F1/V1/A1_a/bsu_nucl-bd"/>
</dbReference>
<dbReference type="InterPro" id="IPR027417">
    <property type="entry name" value="P-loop_NTPase"/>
</dbReference>
<dbReference type="NCBIfam" id="TIGR00962">
    <property type="entry name" value="atpA"/>
    <property type="match status" value="1"/>
</dbReference>
<dbReference type="NCBIfam" id="NF009884">
    <property type="entry name" value="PRK13343.1"/>
    <property type="match status" value="1"/>
</dbReference>
<dbReference type="PANTHER" id="PTHR48082">
    <property type="entry name" value="ATP SYNTHASE SUBUNIT ALPHA, MITOCHONDRIAL"/>
    <property type="match status" value="1"/>
</dbReference>
<dbReference type="PANTHER" id="PTHR48082:SF2">
    <property type="entry name" value="ATP SYNTHASE SUBUNIT ALPHA, MITOCHONDRIAL"/>
    <property type="match status" value="1"/>
</dbReference>
<dbReference type="Pfam" id="PF00006">
    <property type="entry name" value="ATP-synt_ab"/>
    <property type="match status" value="1"/>
</dbReference>
<dbReference type="Pfam" id="PF00306">
    <property type="entry name" value="ATP-synt_ab_C"/>
    <property type="match status" value="1"/>
</dbReference>
<dbReference type="Pfam" id="PF02874">
    <property type="entry name" value="ATP-synt_ab_N"/>
    <property type="match status" value="1"/>
</dbReference>
<dbReference type="PIRSF" id="PIRSF039088">
    <property type="entry name" value="F_ATPase_subunit_alpha"/>
    <property type="match status" value="1"/>
</dbReference>
<dbReference type="SUPFAM" id="SSF47917">
    <property type="entry name" value="C-terminal domain of alpha and beta subunits of F1 ATP synthase"/>
    <property type="match status" value="1"/>
</dbReference>
<dbReference type="SUPFAM" id="SSF50615">
    <property type="entry name" value="N-terminal domain of alpha and beta subunits of F1 ATP synthase"/>
    <property type="match status" value="1"/>
</dbReference>
<dbReference type="SUPFAM" id="SSF52540">
    <property type="entry name" value="P-loop containing nucleoside triphosphate hydrolases"/>
    <property type="match status" value="1"/>
</dbReference>
<dbReference type="PROSITE" id="PS00152">
    <property type="entry name" value="ATPASE_ALPHA_BETA"/>
    <property type="match status" value="1"/>
</dbReference>
<keyword id="KW-0066">ATP synthesis</keyword>
<keyword id="KW-0067">ATP-binding</keyword>
<keyword id="KW-0997">Cell inner membrane</keyword>
<keyword id="KW-1003">Cell membrane</keyword>
<keyword id="KW-0139">CF(1)</keyword>
<keyword id="KW-0375">Hydrogen ion transport</keyword>
<keyword id="KW-0406">Ion transport</keyword>
<keyword id="KW-0472">Membrane</keyword>
<keyword id="KW-0547">Nucleotide-binding</keyword>
<keyword id="KW-1278">Translocase</keyword>
<keyword id="KW-0813">Transport</keyword>